<gene>
    <name evidence="1" type="primary">cysI</name>
    <name type="ordered locus">SeAg_B3077</name>
</gene>
<protein>
    <recommendedName>
        <fullName evidence="1">Sulfite reductase [NADPH] hemoprotein beta-component</fullName>
        <shortName evidence="1">SiR-HP</shortName>
        <shortName evidence="1">SiRHP</shortName>
        <ecNumber evidence="1">1.8.1.2</ecNumber>
    </recommendedName>
</protein>
<sequence>MSEKHPGPLVVEGKLSDAERMKLESNYLRGTIVEDLNDGLTGGFKGDNFLLIRFHGMYQQDDRDIRAERAAQKLEPRHAMLLRCRLPGGVITTTQWQAIDKFAADNTIYGSIRLTNRQTFQFHGILKKNVKPVHQMLHSVGLDALATANDMNRNVLCTSNPYESQLHAEAYEWAKKISEHLLPRTRAYAEIWLDQEKVATTDEEPILGQTYLPRKFKTTVVIPPQNDIDLHANDMNFVAIAENGKLVGFNLLVGGGLSIEHGNKKTYARTASEFGYLPLEHTLAVAEAVVTTQRDWGNRTDRKNAKTKYTLERVGLETFKAEVERRAGITFEPIRPYEFTGRGDRIGWVKGIDDKWHLTLFIESGRILDYPGRPLKTGLLEIAKIHQGEFRITANQNLIIASVPESQKAKIETLARDHGLMNAVKPQRENSMACVSFPTCPLAMAEAERFLPSFTDKVEAILEKHGIPDEHIVMRVTGCPNGCGRAMLAEIGLVGKAPGRYNLHLGGNRIGSRIPRMYQENITEPDILASLDELIGRWAKEREAGEGFGDFTVRAGIIRPVLDPARDFWE</sequence>
<feature type="chain" id="PRO_1000146653" description="Sulfite reductase [NADPH] hemoprotein beta-component">
    <location>
        <begin position="1"/>
        <end position="570"/>
    </location>
</feature>
<feature type="binding site" evidence="1">
    <location>
        <position position="434"/>
    </location>
    <ligand>
        <name>[4Fe-4S] cluster</name>
        <dbReference type="ChEBI" id="CHEBI:49883"/>
    </ligand>
</feature>
<feature type="binding site" evidence="1">
    <location>
        <position position="440"/>
    </location>
    <ligand>
        <name>[4Fe-4S] cluster</name>
        <dbReference type="ChEBI" id="CHEBI:49883"/>
    </ligand>
</feature>
<feature type="binding site" evidence="1">
    <location>
        <position position="479"/>
    </location>
    <ligand>
        <name>[4Fe-4S] cluster</name>
        <dbReference type="ChEBI" id="CHEBI:49883"/>
    </ligand>
</feature>
<feature type="binding site" evidence="1">
    <location>
        <position position="483"/>
    </location>
    <ligand>
        <name>[4Fe-4S] cluster</name>
        <dbReference type="ChEBI" id="CHEBI:49883"/>
    </ligand>
</feature>
<feature type="binding site" description="axial binding residue" evidence="1">
    <location>
        <position position="483"/>
    </location>
    <ligand>
        <name>siroheme</name>
        <dbReference type="ChEBI" id="CHEBI:60052"/>
    </ligand>
    <ligandPart>
        <name>Fe</name>
        <dbReference type="ChEBI" id="CHEBI:18248"/>
    </ligandPart>
</feature>
<proteinExistence type="inferred from homology"/>
<accession>B5F430</accession>
<evidence type="ECO:0000255" key="1">
    <source>
        <dbReference type="HAMAP-Rule" id="MF_01540"/>
    </source>
</evidence>
<organism>
    <name type="scientific">Salmonella agona (strain SL483)</name>
    <dbReference type="NCBI Taxonomy" id="454166"/>
    <lineage>
        <taxon>Bacteria</taxon>
        <taxon>Pseudomonadati</taxon>
        <taxon>Pseudomonadota</taxon>
        <taxon>Gammaproteobacteria</taxon>
        <taxon>Enterobacterales</taxon>
        <taxon>Enterobacteriaceae</taxon>
        <taxon>Salmonella</taxon>
    </lineage>
</organism>
<comment type="function">
    <text evidence="1">Component of the sulfite reductase complex that catalyzes the 6-electron reduction of sulfite to sulfide. This is one of several activities required for the biosynthesis of L-cysteine from sulfate.</text>
</comment>
<comment type="catalytic activity">
    <reaction evidence="1">
        <text>hydrogen sulfide + 3 NADP(+) + 3 H2O = sulfite + 3 NADPH + 4 H(+)</text>
        <dbReference type="Rhea" id="RHEA:13801"/>
        <dbReference type="ChEBI" id="CHEBI:15377"/>
        <dbReference type="ChEBI" id="CHEBI:15378"/>
        <dbReference type="ChEBI" id="CHEBI:17359"/>
        <dbReference type="ChEBI" id="CHEBI:29919"/>
        <dbReference type="ChEBI" id="CHEBI:57783"/>
        <dbReference type="ChEBI" id="CHEBI:58349"/>
        <dbReference type="EC" id="1.8.1.2"/>
    </reaction>
</comment>
<comment type="cofactor">
    <cofactor evidence="1">
        <name>siroheme</name>
        <dbReference type="ChEBI" id="CHEBI:60052"/>
    </cofactor>
    <text evidence="1">Binds 1 siroheme per subunit.</text>
</comment>
<comment type="cofactor">
    <cofactor evidence="1">
        <name>[4Fe-4S] cluster</name>
        <dbReference type="ChEBI" id="CHEBI:49883"/>
    </cofactor>
    <text evidence="1">Binds 1 [4Fe-4S] cluster per subunit.</text>
</comment>
<comment type="pathway">
    <text evidence="1">Sulfur metabolism; hydrogen sulfide biosynthesis; hydrogen sulfide from sulfite (NADPH route): step 1/1.</text>
</comment>
<comment type="subunit">
    <text evidence="1">Alpha(8)-beta(8). The alpha component is a flavoprotein, the beta component is a hemoprotein.</text>
</comment>
<comment type="similarity">
    <text evidence="1">Belongs to the nitrite and sulfite reductase 4Fe-4S domain family.</text>
</comment>
<name>CYSI_SALA4</name>
<dbReference type="EC" id="1.8.1.2" evidence="1"/>
<dbReference type="EMBL" id="CP001138">
    <property type="protein sequence ID" value="ACH49458.1"/>
    <property type="molecule type" value="Genomic_DNA"/>
</dbReference>
<dbReference type="RefSeq" id="WP_001290673.1">
    <property type="nucleotide sequence ID" value="NC_011149.1"/>
</dbReference>
<dbReference type="SMR" id="B5F430"/>
<dbReference type="KEGG" id="sea:SeAg_B3077"/>
<dbReference type="HOGENOM" id="CLU_001975_3_2_6"/>
<dbReference type="UniPathway" id="UPA00140">
    <property type="reaction ID" value="UER00207"/>
</dbReference>
<dbReference type="Proteomes" id="UP000008819">
    <property type="component" value="Chromosome"/>
</dbReference>
<dbReference type="GO" id="GO:0009337">
    <property type="term" value="C:sulfite reductase complex (NADPH)"/>
    <property type="evidence" value="ECO:0007669"/>
    <property type="project" value="InterPro"/>
</dbReference>
<dbReference type="GO" id="GO:0051539">
    <property type="term" value="F:4 iron, 4 sulfur cluster binding"/>
    <property type="evidence" value="ECO:0007669"/>
    <property type="project" value="UniProtKB-KW"/>
</dbReference>
<dbReference type="GO" id="GO:0020037">
    <property type="term" value="F:heme binding"/>
    <property type="evidence" value="ECO:0007669"/>
    <property type="project" value="InterPro"/>
</dbReference>
<dbReference type="GO" id="GO:0046872">
    <property type="term" value="F:metal ion binding"/>
    <property type="evidence" value="ECO:0007669"/>
    <property type="project" value="UniProtKB-KW"/>
</dbReference>
<dbReference type="GO" id="GO:0050661">
    <property type="term" value="F:NADP binding"/>
    <property type="evidence" value="ECO:0007669"/>
    <property type="project" value="InterPro"/>
</dbReference>
<dbReference type="GO" id="GO:0050311">
    <property type="term" value="F:sulfite reductase (ferredoxin) activity"/>
    <property type="evidence" value="ECO:0007669"/>
    <property type="project" value="TreeGrafter"/>
</dbReference>
<dbReference type="GO" id="GO:0004783">
    <property type="term" value="F:sulfite reductase (NADPH) activity"/>
    <property type="evidence" value="ECO:0007669"/>
    <property type="project" value="UniProtKB-UniRule"/>
</dbReference>
<dbReference type="GO" id="GO:0019344">
    <property type="term" value="P:cysteine biosynthetic process"/>
    <property type="evidence" value="ECO:0007669"/>
    <property type="project" value="UniProtKB-KW"/>
</dbReference>
<dbReference type="GO" id="GO:0070814">
    <property type="term" value="P:hydrogen sulfide biosynthetic process"/>
    <property type="evidence" value="ECO:0007669"/>
    <property type="project" value="UniProtKB-UniRule"/>
</dbReference>
<dbReference type="GO" id="GO:0000103">
    <property type="term" value="P:sulfate assimilation"/>
    <property type="evidence" value="ECO:0007669"/>
    <property type="project" value="UniProtKB-UniRule"/>
</dbReference>
<dbReference type="FunFam" id="3.30.413.10:FF:000003">
    <property type="entry name" value="Sulfite reductase [NADPH] hemoprotein beta-component"/>
    <property type="match status" value="1"/>
</dbReference>
<dbReference type="FunFam" id="3.30.413.10:FF:000004">
    <property type="entry name" value="Sulfite reductase [NADPH] hemoprotein beta-component"/>
    <property type="match status" value="1"/>
</dbReference>
<dbReference type="Gene3D" id="3.30.413.10">
    <property type="entry name" value="Sulfite Reductase Hemoprotein, domain 1"/>
    <property type="match status" value="2"/>
</dbReference>
<dbReference type="HAMAP" id="MF_01540">
    <property type="entry name" value="CysI"/>
    <property type="match status" value="1"/>
</dbReference>
<dbReference type="InterPro" id="IPR011786">
    <property type="entry name" value="CysI"/>
</dbReference>
<dbReference type="InterPro" id="IPR005117">
    <property type="entry name" value="NiRdtase/SiRdtase_haem-b_fer"/>
</dbReference>
<dbReference type="InterPro" id="IPR036136">
    <property type="entry name" value="Nit/Sulf_reduc_fer-like_dom_sf"/>
</dbReference>
<dbReference type="InterPro" id="IPR006067">
    <property type="entry name" value="NO2/SO3_Rdtase_4Fe4S_dom"/>
</dbReference>
<dbReference type="InterPro" id="IPR045169">
    <property type="entry name" value="NO2/SO3_Rdtase_4Fe4S_prot"/>
</dbReference>
<dbReference type="InterPro" id="IPR045854">
    <property type="entry name" value="NO2/SO3_Rdtase_4Fe4S_sf"/>
</dbReference>
<dbReference type="InterPro" id="IPR006066">
    <property type="entry name" value="NO2/SO3_Rdtase_FeS/sirohaem_BS"/>
</dbReference>
<dbReference type="NCBIfam" id="TIGR02041">
    <property type="entry name" value="CysI"/>
    <property type="match status" value="1"/>
</dbReference>
<dbReference type="NCBIfam" id="NF010029">
    <property type="entry name" value="PRK13504.1"/>
    <property type="match status" value="1"/>
</dbReference>
<dbReference type="PANTHER" id="PTHR11493:SF47">
    <property type="entry name" value="SULFITE REDUCTASE [NADPH] SUBUNIT BETA"/>
    <property type="match status" value="1"/>
</dbReference>
<dbReference type="PANTHER" id="PTHR11493">
    <property type="entry name" value="SULFITE REDUCTASE [NADPH] SUBUNIT BETA-RELATED"/>
    <property type="match status" value="1"/>
</dbReference>
<dbReference type="Pfam" id="PF01077">
    <property type="entry name" value="NIR_SIR"/>
    <property type="match status" value="1"/>
</dbReference>
<dbReference type="Pfam" id="PF03460">
    <property type="entry name" value="NIR_SIR_ferr"/>
    <property type="match status" value="2"/>
</dbReference>
<dbReference type="PRINTS" id="PR00397">
    <property type="entry name" value="SIROHAEM"/>
</dbReference>
<dbReference type="SUPFAM" id="SSF56014">
    <property type="entry name" value="Nitrite and sulphite reductase 4Fe-4S domain-like"/>
    <property type="match status" value="2"/>
</dbReference>
<dbReference type="SUPFAM" id="SSF55124">
    <property type="entry name" value="Nitrite/Sulfite reductase N-terminal domain-like"/>
    <property type="match status" value="2"/>
</dbReference>
<dbReference type="PROSITE" id="PS00365">
    <property type="entry name" value="NIR_SIR"/>
    <property type="match status" value="1"/>
</dbReference>
<reference key="1">
    <citation type="journal article" date="2011" name="J. Bacteriol.">
        <title>Comparative genomics of 28 Salmonella enterica isolates: evidence for CRISPR-mediated adaptive sublineage evolution.</title>
        <authorList>
            <person name="Fricke W.F."/>
            <person name="Mammel M.K."/>
            <person name="McDermott P.F."/>
            <person name="Tartera C."/>
            <person name="White D.G."/>
            <person name="Leclerc J.E."/>
            <person name="Ravel J."/>
            <person name="Cebula T.A."/>
        </authorList>
    </citation>
    <scope>NUCLEOTIDE SEQUENCE [LARGE SCALE GENOMIC DNA]</scope>
    <source>
        <strain>SL483</strain>
    </source>
</reference>
<keyword id="KW-0004">4Fe-4S</keyword>
<keyword id="KW-0028">Amino-acid biosynthesis</keyword>
<keyword id="KW-0198">Cysteine biosynthesis</keyword>
<keyword id="KW-0349">Heme</keyword>
<keyword id="KW-0408">Iron</keyword>
<keyword id="KW-0411">Iron-sulfur</keyword>
<keyword id="KW-0479">Metal-binding</keyword>
<keyword id="KW-0521">NADP</keyword>
<keyword id="KW-0560">Oxidoreductase</keyword>